<dbReference type="EMBL" id="U00039">
    <property type="protein sequence ID" value="AAB18525.1"/>
    <property type="status" value="ALT_INIT"/>
    <property type="molecule type" value="Genomic_DNA"/>
</dbReference>
<dbReference type="EMBL" id="U00096">
    <property type="protein sequence ID" value="AAC76572.2"/>
    <property type="molecule type" value="Genomic_DNA"/>
</dbReference>
<dbReference type="EMBL" id="AP009048">
    <property type="protein sequence ID" value="BAE77747.1"/>
    <property type="molecule type" value="Genomic_DNA"/>
</dbReference>
<dbReference type="PIR" id="S47769">
    <property type="entry name" value="S47769"/>
</dbReference>
<dbReference type="RefSeq" id="NP_418004.4">
    <property type="nucleotide sequence ID" value="NC_000913.3"/>
</dbReference>
<dbReference type="RefSeq" id="WP_001299523.1">
    <property type="nucleotide sequence ID" value="NZ_SSZK01000068.1"/>
</dbReference>
<dbReference type="BioGRID" id="4261373">
    <property type="interactions" value="153"/>
</dbReference>
<dbReference type="FunCoup" id="P37663">
    <property type="interactions" value="101"/>
</dbReference>
<dbReference type="STRING" id="511145.b3548"/>
<dbReference type="PaxDb" id="511145-b3548"/>
<dbReference type="EnsemblBacteria" id="AAC76572">
    <property type="protein sequence ID" value="AAC76572"/>
    <property type="gene ID" value="b3548"/>
</dbReference>
<dbReference type="GeneID" id="948073"/>
<dbReference type="KEGG" id="ecj:JW5659"/>
<dbReference type="KEGG" id="eco:b3548"/>
<dbReference type="KEGG" id="ecoc:C3026_19235"/>
<dbReference type="PATRIC" id="fig|511145.12.peg.3661"/>
<dbReference type="EchoBASE" id="EB2178"/>
<dbReference type="eggNOG" id="COG5571">
    <property type="taxonomic scope" value="Bacteria"/>
</dbReference>
<dbReference type="HOGENOM" id="CLU_111506_1_0_6"/>
<dbReference type="InParanoid" id="P37663"/>
<dbReference type="OMA" id="SERYTWD"/>
<dbReference type="OrthoDB" id="5292073at2"/>
<dbReference type="PhylomeDB" id="P37663"/>
<dbReference type="BioCyc" id="EcoCyc:EG12269-MONOMER"/>
<dbReference type="PRO" id="PR:P37663"/>
<dbReference type="Proteomes" id="UP000000625">
    <property type="component" value="Chromosome"/>
</dbReference>
<dbReference type="GO" id="GO:0019867">
    <property type="term" value="C:outer membrane"/>
    <property type="evidence" value="ECO:0007669"/>
    <property type="project" value="InterPro"/>
</dbReference>
<dbReference type="Gene3D" id="2.40.128.130">
    <property type="entry name" value="Autotransporter beta-domain"/>
    <property type="match status" value="1"/>
</dbReference>
<dbReference type="InterPro" id="IPR005546">
    <property type="entry name" value="Autotransporte_beta"/>
</dbReference>
<dbReference type="InterPro" id="IPR036709">
    <property type="entry name" value="Autotransporte_beta_dom_sf"/>
</dbReference>
<dbReference type="InterPro" id="IPR016955">
    <property type="entry name" value="Autotranspt_YhjY_prd"/>
</dbReference>
<dbReference type="InterPro" id="IPR006315">
    <property type="entry name" value="OM_autotransptr_brl_dom"/>
</dbReference>
<dbReference type="NCBIfam" id="TIGR01414">
    <property type="entry name" value="autotrans_barl"/>
    <property type="match status" value="1"/>
</dbReference>
<dbReference type="Pfam" id="PF03797">
    <property type="entry name" value="Autotransporter"/>
    <property type="match status" value="1"/>
</dbReference>
<dbReference type="PIRSF" id="PIRSF030748">
    <property type="entry name" value="Autotransporter_YhjY_prd"/>
    <property type="match status" value="1"/>
</dbReference>
<dbReference type="SUPFAM" id="SSF103515">
    <property type="entry name" value="Autotransporter"/>
    <property type="match status" value="1"/>
</dbReference>
<dbReference type="PROSITE" id="PS51208">
    <property type="entry name" value="AUTOTRANSPORTER"/>
    <property type="match status" value="1"/>
</dbReference>
<evidence type="ECO:0000255" key="1">
    <source>
        <dbReference type="PROSITE-ProRule" id="PRU00556"/>
    </source>
</evidence>
<evidence type="ECO:0000269" key="2">
    <source>
    </source>
</evidence>
<evidence type="ECO:0000305" key="3"/>
<accession>P37663</accession>
<accession>P76714</accession>
<accession>Q2M7K9</accession>
<feature type="chain" id="PRO_0000169586" description="Uncharacterized protein YhjY">
    <location>
        <begin position="1"/>
        <end position="232"/>
    </location>
</feature>
<feature type="domain" description="Autotransporter" evidence="1">
    <location>
        <begin position="1"/>
        <end position="232"/>
    </location>
</feature>
<proteinExistence type="predicted"/>
<keyword id="KW-1185">Reference proteome</keyword>
<name>YHJY_ECOLI</name>
<reference key="1">
    <citation type="journal article" date="1994" name="Nucleic Acids Res.">
        <title>Analysis of the Escherichia coli genome. V. DNA sequence of the region from 76.0 to 81.5 minutes.</title>
        <authorList>
            <person name="Sofia H.J."/>
            <person name="Burland V."/>
            <person name="Daniels D.L."/>
            <person name="Plunkett G. III"/>
            <person name="Blattner F.R."/>
        </authorList>
    </citation>
    <scope>NUCLEOTIDE SEQUENCE [LARGE SCALE GENOMIC DNA]</scope>
    <source>
        <strain>K12 / MG1655 / ATCC 47076</strain>
    </source>
</reference>
<reference key="2">
    <citation type="journal article" date="1997" name="Science">
        <title>The complete genome sequence of Escherichia coli K-12.</title>
        <authorList>
            <person name="Blattner F.R."/>
            <person name="Plunkett G. III"/>
            <person name="Bloch C.A."/>
            <person name="Perna N.T."/>
            <person name="Burland V."/>
            <person name="Riley M."/>
            <person name="Collado-Vides J."/>
            <person name="Glasner J.D."/>
            <person name="Rode C.K."/>
            <person name="Mayhew G.F."/>
            <person name="Gregor J."/>
            <person name="Davis N.W."/>
            <person name="Kirkpatrick H.A."/>
            <person name="Goeden M.A."/>
            <person name="Rose D.J."/>
            <person name="Mau B."/>
            <person name="Shao Y."/>
        </authorList>
    </citation>
    <scope>NUCLEOTIDE SEQUENCE [LARGE SCALE GENOMIC DNA]</scope>
    <source>
        <strain>K12 / MG1655 / ATCC 47076</strain>
    </source>
</reference>
<reference key="3">
    <citation type="journal article" date="2006" name="Mol. Syst. Biol.">
        <title>Highly accurate genome sequences of Escherichia coli K-12 strains MG1655 and W3110.</title>
        <authorList>
            <person name="Hayashi K."/>
            <person name="Morooka N."/>
            <person name="Yamamoto Y."/>
            <person name="Fujita K."/>
            <person name="Isono K."/>
            <person name="Choi S."/>
            <person name="Ohtsubo E."/>
            <person name="Baba T."/>
            <person name="Wanner B.L."/>
            <person name="Mori H."/>
            <person name="Horiuchi T."/>
        </authorList>
    </citation>
    <scope>NUCLEOTIDE SEQUENCE [LARGE SCALE GENOMIC DNA]</scope>
    <source>
        <strain>K12 / W3110 / ATCC 27325 / DSM 5911</strain>
    </source>
</reference>
<reference key="4">
    <citation type="journal article" date="2015" name="Bioinformatics">
        <title>Novel function discovery with GeneMANIA: a new integrated resource for gene function prediction in Escherichia coli.</title>
        <authorList>
            <person name="Vlasblom J."/>
            <person name="Zuberi K."/>
            <person name="Rodriguez H."/>
            <person name="Arnold R."/>
            <person name="Gagarinova A."/>
            <person name="Deineko V."/>
            <person name="Kumar A."/>
            <person name="Leung E."/>
            <person name="Rizzolo K."/>
            <person name="Samanfar B."/>
            <person name="Chang L."/>
            <person name="Phanse S."/>
            <person name="Golshani A."/>
            <person name="Greenblatt J.F."/>
            <person name="Houry W.A."/>
            <person name="Emili A."/>
            <person name="Morris Q."/>
            <person name="Bader G."/>
            <person name="Babu M."/>
        </authorList>
    </citation>
    <scope>DISRUPTION PHENOTYPE</scope>
    <source>
        <strain>K12 / BW25113</strain>
    </source>
</reference>
<protein>
    <recommendedName>
        <fullName>Uncharacterized protein YhjY</fullName>
    </recommendedName>
</protein>
<sequence>MIIKKSGGRWQLSLLASVVISAFFLNTAYAWQQEYIVDTQPGLSTERYTWDSDHQPDYNDILSQRIQSSQRALGLEVNLAEETPVDVTSSMSMGWNFPLYEQVTTGPVAALHYDGTTTSMYNEFGDSTTTLTDPLWHASVSTLGWRVDSRLGDLRPWAQISYNQQFGENIWKAQSGLSRMTATNQNGNWLDVTVGADMLLNQNIAAYAALTQAENTTNNSDYLYTMGVSARF</sequence>
<organism>
    <name type="scientific">Escherichia coli (strain K12)</name>
    <dbReference type="NCBI Taxonomy" id="83333"/>
    <lineage>
        <taxon>Bacteria</taxon>
        <taxon>Pseudomonadati</taxon>
        <taxon>Pseudomonadota</taxon>
        <taxon>Gammaproteobacteria</taxon>
        <taxon>Enterobacterales</taxon>
        <taxon>Enterobacteriaceae</taxon>
        <taxon>Escherichia</taxon>
    </lineage>
</organism>
<comment type="disruption phenotype">
    <text evidence="2">Increased biofilm formation.</text>
</comment>
<comment type="sequence caution" evidence="3">
    <conflict type="erroneous initiation">
        <sequence resource="EMBL-CDS" id="AAB18525"/>
    </conflict>
    <text>Extended N-terminus.</text>
</comment>
<gene>
    <name type="primary">yhjY</name>
    <name type="ordered locus">b3548</name>
    <name type="ordered locus">JW5659</name>
</gene>